<accession>A0A2C9VBV6</accession>
<keyword id="KW-1003">Cell membrane</keyword>
<keyword id="KW-0406">Ion transport</keyword>
<keyword id="KW-0472">Membrane</keyword>
<keyword id="KW-0630">Potassium</keyword>
<keyword id="KW-0633">Potassium transport</keyword>
<keyword id="KW-1185">Reference proteome</keyword>
<keyword id="KW-0346">Stress response</keyword>
<keyword id="KW-0812">Transmembrane</keyword>
<keyword id="KW-1133">Transmembrane helix</keyword>
<keyword id="KW-0813">Transport</keyword>
<dbReference type="EMBL" id="CM004395">
    <property type="protein sequence ID" value="OAY42349.1"/>
    <property type="molecule type" value="Genomic_DNA"/>
</dbReference>
<dbReference type="STRING" id="3983.A0A2C9VBV6"/>
<dbReference type="EnsemblPlants" id="Manes.09G172900.1.v8.1">
    <property type="protein sequence ID" value="Manes.09G172900.1.v8.1.CDS"/>
    <property type="gene ID" value="Manes.09G172900.v8.1"/>
</dbReference>
<dbReference type="Gramene" id="Manes.09G172900.1.v8.1">
    <property type="protein sequence ID" value="Manes.09G172900.1.v8.1.CDS"/>
    <property type="gene ID" value="Manes.09G172900.v8.1"/>
</dbReference>
<dbReference type="OrthoDB" id="504708at2759"/>
<dbReference type="Proteomes" id="UP000091857">
    <property type="component" value="Chromosome lg9"/>
</dbReference>
<dbReference type="GO" id="GO:0016020">
    <property type="term" value="C:membrane"/>
    <property type="evidence" value="ECO:0000318"/>
    <property type="project" value="GO_Central"/>
</dbReference>
<dbReference type="GO" id="GO:0005886">
    <property type="term" value="C:plasma membrane"/>
    <property type="evidence" value="ECO:0000314"/>
    <property type="project" value="UniProtKB"/>
</dbReference>
<dbReference type="GO" id="GO:0015079">
    <property type="term" value="F:potassium ion transmembrane transporter activity"/>
    <property type="evidence" value="ECO:0000314"/>
    <property type="project" value="UniProtKB"/>
</dbReference>
<dbReference type="GO" id="GO:1901002">
    <property type="term" value="P:positive regulation of response to salt stress"/>
    <property type="evidence" value="ECO:0000314"/>
    <property type="project" value="UniProtKB"/>
</dbReference>
<dbReference type="GO" id="GO:0006813">
    <property type="term" value="P:potassium ion transport"/>
    <property type="evidence" value="ECO:0000318"/>
    <property type="project" value="GO_Central"/>
</dbReference>
<dbReference type="InterPro" id="IPR003855">
    <property type="entry name" value="K+_transporter"/>
</dbReference>
<dbReference type="InterPro" id="IPR053952">
    <property type="entry name" value="K_trans_C"/>
</dbReference>
<dbReference type="InterPro" id="IPR053951">
    <property type="entry name" value="K_trans_N"/>
</dbReference>
<dbReference type="NCBIfam" id="TIGR00794">
    <property type="entry name" value="kup"/>
    <property type="match status" value="1"/>
</dbReference>
<dbReference type="PANTHER" id="PTHR30540">
    <property type="entry name" value="OSMOTIC STRESS POTASSIUM TRANSPORTER"/>
    <property type="match status" value="1"/>
</dbReference>
<dbReference type="PANTHER" id="PTHR30540:SF94">
    <property type="entry name" value="POTASSIUM TRANSPORTER 5"/>
    <property type="match status" value="1"/>
</dbReference>
<dbReference type="Pfam" id="PF02705">
    <property type="entry name" value="K_trans"/>
    <property type="match status" value="1"/>
</dbReference>
<dbReference type="Pfam" id="PF22776">
    <property type="entry name" value="K_trans_C"/>
    <property type="match status" value="1"/>
</dbReference>
<reference key="1">
    <citation type="journal article" date="2016" name="Nat. Biotechnol.">
        <title>Sequencing wild and cultivated cassava and related species reveals extensive interspecific hybridization and genetic diversity.</title>
        <authorList>
            <person name="Bredeson J.V."/>
            <person name="Lyons J.B."/>
            <person name="Prochnik S.E."/>
            <person name="Wu G.A."/>
            <person name="Ha C.M."/>
            <person name="Edsinger-Gonzales E."/>
            <person name="Grimwood J."/>
            <person name="Schmutz J."/>
            <person name="Rabbi I.Y."/>
            <person name="Egesi C."/>
            <person name="Nauluvula P."/>
            <person name="Lebot V."/>
            <person name="Ndunguru J."/>
            <person name="Mkamilo G."/>
            <person name="Bart R.S."/>
            <person name="Setter T.L."/>
            <person name="Gleadow R.M."/>
            <person name="Kulakow P."/>
            <person name="Ferguson M.E."/>
            <person name="Rounsley S."/>
            <person name="Rokhsar D.S."/>
        </authorList>
    </citation>
    <scope>NUCLEOTIDE SEQUENCE [LARGE SCALE GENOMIC DNA]</scope>
    <source>
        <strain>cv. AM560-2</strain>
    </source>
</reference>
<reference key="2">
    <citation type="journal article" date="2024" name="Plants (Basel)">
        <title>Positive regulatory roles of Manihot esculenta HAK5 under K+ deficiency or high salt stress.</title>
        <authorList>
            <person name="Luo M."/>
            <person name="Chu J."/>
            <person name="Wang Y."/>
            <person name="Chang J."/>
            <person name="Zhou Y."/>
            <person name="Jiang X."/>
        </authorList>
    </citation>
    <scope>FUNCTION</scope>
    <scope>TRANSPORTER ACTIVITY</scope>
    <scope>SUBCELLULAR LOCATION</scope>
    <scope>TISSUE SPECIFICITY</scope>
</reference>
<organism>
    <name type="scientific">Manihot esculenta</name>
    <name type="common">Cassava</name>
    <name type="synonym">Jatropha manihot</name>
    <dbReference type="NCBI Taxonomy" id="3983"/>
    <lineage>
        <taxon>Eukaryota</taxon>
        <taxon>Viridiplantae</taxon>
        <taxon>Streptophyta</taxon>
        <taxon>Embryophyta</taxon>
        <taxon>Tracheophyta</taxon>
        <taxon>Spermatophyta</taxon>
        <taxon>Magnoliopsida</taxon>
        <taxon>eudicotyledons</taxon>
        <taxon>Gunneridae</taxon>
        <taxon>Pentapetalae</taxon>
        <taxon>rosids</taxon>
        <taxon>fabids</taxon>
        <taxon>Malpighiales</taxon>
        <taxon>Euphorbiaceae</taxon>
        <taxon>Crotonoideae</taxon>
        <taxon>Manihoteae</taxon>
        <taxon>Manihot</taxon>
    </lineage>
</organism>
<gene>
    <name evidence="4" type="primary">HAK5</name>
    <name evidence="6" type="ORF">MANES_09G172900</name>
</gene>
<name>HAK5_MANES</name>
<protein>
    <recommendedName>
        <fullName evidence="5">Potassium transporter 5</fullName>
    </recommendedName>
    <alternativeName>
        <fullName evidence="4">MeHAK5</fullName>
    </alternativeName>
</protein>
<proteinExistence type="evidence at transcript level"/>
<feature type="chain" id="PRO_0000460727" description="Potassium transporter 5">
    <location>
        <begin position="1"/>
        <end position="808"/>
    </location>
</feature>
<feature type="topological domain" description="Cytoplasmic" evidence="5">
    <location>
        <begin position="1"/>
        <end position="65"/>
    </location>
</feature>
<feature type="transmembrane region" description="Helical" evidence="1">
    <location>
        <begin position="66"/>
        <end position="86"/>
    </location>
</feature>
<feature type="topological domain" description="Extracellular" evidence="5">
    <location>
        <begin position="87"/>
        <end position="102"/>
    </location>
</feature>
<feature type="transmembrane region" description="Helical" evidence="1">
    <location>
        <begin position="103"/>
        <end position="123"/>
    </location>
</feature>
<feature type="topological domain" description="Cytoplasmic" evidence="5">
    <location>
        <begin position="124"/>
        <end position="189"/>
    </location>
</feature>
<feature type="transmembrane region" description="Helical" evidence="1">
    <location>
        <begin position="190"/>
        <end position="210"/>
    </location>
</feature>
<feature type="topological domain" description="Extracellular" evidence="5">
    <location>
        <begin position="211"/>
        <end position="221"/>
    </location>
</feature>
<feature type="transmembrane region" description="Helical" evidence="1">
    <location>
        <begin position="222"/>
        <end position="242"/>
    </location>
</feature>
<feature type="topological domain" description="Cytoplasmic" evidence="5">
    <location>
        <begin position="243"/>
        <end position="251"/>
    </location>
</feature>
<feature type="transmembrane region" description="Helical" evidence="1">
    <location>
        <begin position="252"/>
        <end position="272"/>
    </location>
</feature>
<feature type="topological domain" description="Extracellular" evidence="5">
    <location>
        <begin position="273"/>
        <end position="302"/>
    </location>
</feature>
<feature type="transmembrane region" description="Helical" evidence="1">
    <location>
        <begin position="303"/>
        <end position="323"/>
    </location>
</feature>
<feature type="topological domain" description="Cytoplasmic" evidence="5">
    <location>
        <begin position="324"/>
        <end position="327"/>
    </location>
</feature>
<feature type="transmembrane region" description="Helical" evidence="1">
    <location>
        <begin position="328"/>
        <end position="348"/>
    </location>
</feature>
<feature type="topological domain" description="Extracellular" evidence="5">
    <location>
        <begin position="349"/>
        <end position="379"/>
    </location>
</feature>
<feature type="transmembrane region" description="Helical" evidence="1">
    <location>
        <begin position="380"/>
        <end position="400"/>
    </location>
</feature>
<feature type="topological domain" description="Cytoplasmic" evidence="5">
    <location>
        <begin position="401"/>
        <end position="424"/>
    </location>
</feature>
<feature type="transmembrane region" description="Helical" evidence="1">
    <location>
        <begin position="425"/>
        <end position="445"/>
    </location>
</feature>
<feature type="topological domain" description="Extracellular" evidence="5">
    <location>
        <begin position="446"/>
        <end position="456"/>
    </location>
</feature>
<feature type="transmembrane region" description="Helical" evidence="1">
    <location>
        <begin position="457"/>
        <end position="477"/>
    </location>
</feature>
<feature type="topological domain" description="Cytoplasmic" evidence="5">
    <location>
        <begin position="478"/>
        <end position="482"/>
    </location>
</feature>
<feature type="transmembrane region" description="Helical" evidence="1">
    <location>
        <begin position="483"/>
        <end position="503"/>
    </location>
</feature>
<feature type="topological domain" description="Extracellular" evidence="5">
    <location>
        <begin position="504"/>
        <end position="510"/>
    </location>
</feature>
<feature type="transmembrane region" description="Helical" evidence="1">
    <location>
        <begin position="511"/>
        <end position="531"/>
    </location>
</feature>
<feature type="topological domain" description="Cytoplasmic" evidence="5">
    <location>
        <begin position="532"/>
        <end position="808"/>
    </location>
</feature>
<feature type="region of interest" description="Disordered" evidence="2">
    <location>
        <begin position="699"/>
        <end position="722"/>
    </location>
</feature>
<sequence>MAEEVGETRGGEGKEKTETMAVENKLKERKISWAKLRRVDSLNLEAGRVSKTQHNNQVNWKKTLSLTFQSIGVVYGDIGTSPLYVYESTFPDKIGSKEDILGVLSLIIYTLVLLPMLKYVFIVLRANDNGDGGTFALYSLLSRYVKVSLIPNDQPEDTQLSNYKLEIPSNQLKRSEKIKEKMENSKNIKILLFLVTILGTSMVIGDGVLTPCISVLSAVSGIGSLGQDAVVGISIAILIVLFCAQRLGTDKVGFSFAPIILLWFSFIGGIGLYNLFKYDVSVLRAFNPKYMFDYFKRNGKQGWISLGGVVLAVTGTEAMFADLGHFNVQAIQISFSGIVFPALLCAYAGQAAYLTKFPDDVSKTFYKSIPDPLYWPTFVVAVAAAIIASQAMISGAFAIISQSLSLGCFPRVKVIHTSAKYEGQVYIPEVNYILMIACIMVCLGFKTTEKIGNAYGIAVVAVMVITTCMVTIIMLVVWRTKMIWIAFFFFGFICIEAVYLSSVLYKFKDGGFLPLAFSFFLMIIMGIWHYIHKERYMYELKNKVSREFIRELAANPNINRVPGIGLLYSELVQGVPPIFPHFIANIPSIHSVLVFVSIKSLPMSKVALEERFLFRQVEPREYRMFRCVVRYGYNDAVEEPQEFERQLVEGLKEFIRHEHFISEGGDAETVGEPENPQSSTLLAKDGKARASAVYIEESLQQPNPSRVSSGSIHSNSGIKSTKSSNGIISAPLQGSAAEEMQIVQNAMEKGVVYLLGEAEVVAEPKSSLFKKFVVNHAYNFLRRNSREGGKVLAIPRARLLRVGMTYEI</sequence>
<comment type="function">
    <text evidence="3">High-affinity potassium transporter that functions under low potassium conditions (PubMed:38592853). Involved in the positive regulation of salt tolerance under salt stress (PubMed:38592853).</text>
</comment>
<comment type="catalytic activity">
    <reaction evidence="3">
        <text>K(+)(in) = K(+)(out)</text>
        <dbReference type="Rhea" id="RHEA:29463"/>
        <dbReference type="ChEBI" id="CHEBI:29103"/>
    </reaction>
</comment>
<comment type="subcellular location">
    <subcellularLocation>
        <location evidence="3">Cell membrane</location>
        <topology evidence="1">Multi-pass membrane protein</topology>
    </subcellularLocation>
</comment>
<comment type="tissue specificity">
    <text evidence="3">Expressed in the roots.</text>
</comment>
<comment type="induction">
    <text evidence="3">In roots, induced under potassium starvation and salt stress.</text>
</comment>
<comment type="similarity">
    <text evidence="5">Belongs to the HAK/KUP transporter (TC 2.A.72.3) family.</text>
</comment>
<evidence type="ECO:0000255" key="1"/>
<evidence type="ECO:0000256" key="2">
    <source>
        <dbReference type="SAM" id="MobiDB-lite"/>
    </source>
</evidence>
<evidence type="ECO:0000269" key="3">
    <source>
    </source>
</evidence>
<evidence type="ECO:0000303" key="4">
    <source>
    </source>
</evidence>
<evidence type="ECO:0000305" key="5"/>
<evidence type="ECO:0000312" key="6">
    <source>
        <dbReference type="EMBL" id="OAY42349.1"/>
    </source>
</evidence>